<protein>
    <recommendedName>
        <fullName evidence="5">Chitin synthase 1</fullName>
        <ecNumber evidence="4">2.4.1.16</ecNumber>
    </recommendedName>
    <alternativeName>
        <fullName evidence="6">Chitin-UDP acetyl-glucosaminyl transferase 1</fullName>
    </alternativeName>
    <alternativeName>
        <fullName evidence="5">Class-II chitin synthase 1</fullName>
    </alternativeName>
</protein>
<dbReference type="EC" id="2.4.1.16" evidence="4"/>
<dbReference type="EMBL" id="CH476732">
    <property type="protein sequence ID" value="EIE76238.1"/>
    <property type="molecule type" value="Genomic_DNA"/>
</dbReference>
<dbReference type="SMR" id="I1BJ58"/>
<dbReference type="STRING" id="246409.I1BJ58"/>
<dbReference type="VEuPathDB" id="FungiDB:RO3G_00942"/>
<dbReference type="eggNOG" id="KOG2571">
    <property type="taxonomic scope" value="Eukaryota"/>
</dbReference>
<dbReference type="InParanoid" id="I1BJ58"/>
<dbReference type="OMA" id="TSKRWAQ"/>
<dbReference type="OrthoDB" id="24707at4827"/>
<dbReference type="Proteomes" id="UP000009138">
    <property type="component" value="Unassembled WGS sequence"/>
</dbReference>
<dbReference type="GO" id="GO:0030428">
    <property type="term" value="C:cell septum"/>
    <property type="evidence" value="ECO:0007669"/>
    <property type="project" value="TreeGrafter"/>
</dbReference>
<dbReference type="GO" id="GO:0005886">
    <property type="term" value="C:plasma membrane"/>
    <property type="evidence" value="ECO:0007669"/>
    <property type="project" value="UniProtKB-SubCell"/>
</dbReference>
<dbReference type="GO" id="GO:0004100">
    <property type="term" value="F:chitin synthase activity"/>
    <property type="evidence" value="ECO:0007669"/>
    <property type="project" value="UniProtKB-EC"/>
</dbReference>
<dbReference type="GO" id="GO:0071555">
    <property type="term" value="P:cell wall organization"/>
    <property type="evidence" value="ECO:0007669"/>
    <property type="project" value="UniProtKB-KW"/>
</dbReference>
<dbReference type="GO" id="GO:0006031">
    <property type="term" value="P:chitin biosynthetic process"/>
    <property type="evidence" value="ECO:0007669"/>
    <property type="project" value="InterPro"/>
</dbReference>
<dbReference type="CDD" id="cd04190">
    <property type="entry name" value="Chitin_synth_C"/>
    <property type="match status" value="1"/>
</dbReference>
<dbReference type="InterPro" id="IPR004835">
    <property type="entry name" value="Chitin_synth"/>
</dbReference>
<dbReference type="InterPro" id="IPR004834">
    <property type="entry name" value="Chitin_synth_fun"/>
</dbReference>
<dbReference type="InterPro" id="IPR013616">
    <property type="entry name" value="Chitin_synth_N"/>
</dbReference>
<dbReference type="InterPro" id="IPR029044">
    <property type="entry name" value="Nucleotide-diphossugar_trans"/>
</dbReference>
<dbReference type="PANTHER" id="PTHR22914">
    <property type="entry name" value="CHITIN SYNTHASE"/>
    <property type="match status" value="1"/>
</dbReference>
<dbReference type="PANTHER" id="PTHR22914:SF9">
    <property type="entry name" value="CHITIN SYNTHASE 1"/>
    <property type="match status" value="1"/>
</dbReference>
<dbReference type="Pfam" id="PF01644">
    <property type="entry name" value="Chitin_synth_1"/>
    <property type="match status" value="1"/>
</dbReference>
<dbReference type="Pfam" id="PF08407">
    <property type="entry name" value="Chitin_synth_1N"/>
    <property type="match status" value="1"/>
</dbReference>
<dbReference type="SUPFAM" id="SSF53448">
    <property type="entry name" value="Nucleotide-diphospho-sugar transferases"/>
    <property type="match status" value="1"/>
</dbReference>
<comment type="function">
    <text evidence="4">Polymerizes chitin, a structural polymer of the cell wall and septum, by transferring the sugar moiety of UDP-GlcNAc to the non-reducing end of the growing chitin polymer.</text>
</comment>
<comment type="catalytic activity">
    <reaction evidence="4">
        <text>[(1-&gt;4)-N-acetyl-beta-D-glucosaminyl](n) + UDP-N-acetyl-alpha-D-glucosamine = [(1-&gt;4)-N-acetyl-beta-D-glucosaminyl](n+1) + UDP + H(+)</text>
        <dbReference type="Rhea" id="RHEA:16637"/>
        <dbReference type="Rhea" id="RHEA-COMP:9593"/>
        <dbReference type="Rhea" id="RHEA-COMP:9595"/>
        <dbReference type="ChEBI" id="CHEBI:15378"/>
        <dbReference type="ChEBI" id="CHEBI:17029"/>
        <dbReference type="ChEBI" id="CHEBI:57705"/>
        <dbReference type="ChEBI" id="CHEBI:58223"/>
        <dbReference type="EC" id="2.4.1.16"/>
    </reaction>
    <physiologicalReaction direction="left-to-right" evidence="4">
        <dbReference type="Rhea" id="RHEA:16638"/>
    </physiologicalReaction>
</comment>
<comment type="biophysicochemical properties">
    <kinetics>
        <KM evidence="4">32.1 mM for UDP-N-acetyl-alpha-D-glucosamine</KM>
    </kinetics>
    <phDependence>
        <text evidence="4">Optimum pH is 5.0 to 8.0.</text>
    </phDependence>
    <temperatureDependence>
        <text evidence="4">Optimum temperature is 15 to 40 degrees Celsius.</text>
    </temperatureDependence>
</comment>
<comment type="subcellular location">
    <subcellularLocation>
        <location evidence="6">Cell membrane</location>
        <topology evidence="1">Multi-pass membrane protein</topology>
    </subcellularLocation>
</comment>
<comment type="similarity">
    <text evidence="6">Belongs to the chitin synthase family. Class II subfamily.</text>
</comment>
<evidence type="ECO:0000255" key="1"/>
<evidence type="ECO:0000255" key="2">
    <source>
        <dbReference type="PROSITE-ProRule" id="PRU00498"/>
    </source>
</evidence>
<evidence type="ECO:0000256" key="3">
    <source>
        <dbReference type="SAM" id="MobiDB-lite"/>
    </source>
</evidence>
<evidence type="ECO:0000269" key="4">
    <source>
    </source>
</evidence>
<evidence type="ECO:0000303" key="5">
    <source>
    </source>
</evidence>
<evidence type="ECO:0000305" key="6"/>
<keyword id="KW-1003">Cell membrane</keyword>
<keyword id="KW-0961">Cell wall biogenesis/degradation</keyword>
<keyword id="KW-0325">Glycoprotein</keyword>
<keyword id="KW-0328">Glycosyltransferase</keyword>
<keyword id="KW-0472">Membrane</keyword>
<keyword id="KW-1185">Reference proteome</keyword>
<keyword id="KW-0808">Transferase</keyword>
<keyword id="KW-0812">Transmembrane</keyword>
<keyword id="KW-1133">Transmembrane helix</keyword>
<proteinExistence type="evidence at protein level"/>
<name>CHS1_RHIO9</name>
<accession>I1BJ58</accession>
<sequence>MSEESGSFGGWFSSWFNTSKDQESSSNLIQQQQPGTNYARNQQTLSSLRSQKQQAESSKEDTRNSPGKLVRTDTESYLDAPKTQQANNNRKVTRRLPLTNNNLVIDCPIPDRLLGALNCTERDEFSQLRYTAATCEPDDFELEGYTLRPKIYNRETELFIEDEILFTRTMHGVMKNIAHLCSLKKNSVWGPDGWKKVVVCIVADGRKVVNKRVLNVLASMGIYQAGIAKNIVDNKPVKAHIYEYTTQISIDSDMNIKGSDKGIVPVQTIFCLKEKNAKKINSHRWFFNAFGPILQPNVCILLDVGTRPGNSSIYQLWKVFHRNPLIGGACGEIRAMLGTACCQLINPLVAAQNFEYKMSNILDKPLESVFGYISVLPGAFSAYRYAALKNDVSGQGPLEKYFLGEDLHKDQHTGKKAGLFEANMYLAEDRILCFELVAKKDERWLLQYVDSAFGETDVPSQLPEFISQRRRWLNGSFFAGVYGLIHFSKIWNSGHGFSRTFLLLIEGIYNVISLIFSWFSVVIVLSFLCT</sequence>
<gene>
    <name evidence="5" type="primary">CHS1</name>
    <name type="ORF">RO3G_00942</name>
</gene>
<organism>
    <name type="scientific">Rhizopus delemar (strain RA 99-880 / ATCC MYA-4621 / FGSC 9543 / NRRL 43880)</name>
    <name type="common">Mucormycosis agent</name>
    <name type="synonym">Rhizopus arrhizus var. delemar</name>
    <dbReference type="NCBI Taxonomy" id="246409"/>
    <lineage>
        <taxon>Eukaryota</taxon>
        <taxon>Fungi</taxon>
        <taxon>Fungi incertae sedis</taxon>
        <taxon>Mucoromycota</taxon>
        <taxon>Mucoromycotina</taxon>
        <taxon>Mucoromycetes</taxon>
        <taxon>Mucorales</taxon>
        <taxon>Mucorineae</taxon>
        <taxon>Rhizopodaceae</taxon>
        <taxon>Rhizopus</taxon>
    </lineage>
</organism>
<feature type="chain" id="PRO_0000460875" description="Chitin synthase 1">
    <location>
        <begin position="1"/>
        <end position="530"/>
    </location>
</feature>
<feature type="transmembrane region" description="Helical" evidence="1">
    <location>
        <begin position="477"/>
        <end position="497"/>
    </location>
</feature>
<feature type="transmembrane region" description="Helical" evidence="1">
    <location>
        <begin position="508"/>
        <end position="528"/>
    </location>
</feature>
<feature type="region of interest" description="Disordered" evidence="3">
    <location>
        <begin position="22"/>
        <end position="94"/>
    </location>
</feature>
<feature type="compositionally biased region" description="Polar residues" evidence="3">
    <location>
        <begin position="24"/>
        <end position="56"/>
    </location>
</feature>
<feature type="glycosylation site" description="N-linked (GlcNAc...) asparagine" evidence="2">
    <location>
        <position position="17"/>
    </location>
</feature>
<feature type="glycosylation site" description="N-linked (GlcNAc...) asparagine" evidence="2">
    <location>
        <position position="118"/>
    </location>
</feature>
<feature type="glycosylation site" description="N-linked (GlcNAc...) asparagine" evidence="2">
    <location>
        <position position="310"/>
    </location>
</feature>
<feature type="glycosylation site" description="N-linked (GlcNAc...) asparagine" evidence="2">
    <location>
        <position position="474"/>
    </location>
</feature>
<reference key="1">
    <citation type="journal article" date="2009" name="PLoS Genet.">
        <title>Genomic analysis of the basal lineage fungus Rhizopus oryzae reveals a whole-genome duplication.</title>
        <authorList>
            <person name="Ma L.-J."/>
            <person name="Ibrahim A.S."/>
            <person name="Skory C."/>
            <person name="Grabherr M.G."/>
            <person name="Burger G."/>
            <person name="Butler M."/>
            <person name="Elias M."/>
            <person name="Idnurm A."/>
            <person name="Lang B.F."/>
            <person name="Sone T."/>
            <person name="Abe A."/>
            <person name="Calvo S.E."/>
            <person name="Corrochano L.M."/>
            <person name="Engels R."/>
            <person name="Fu J."/>
            <person name="Hansberg W."/>
            <person name="Kim J.-M."/>
            <person name="Kodira C.D."/>
            <person name="Koehrsen M.J."/>
            <person name="Liu B."/>
            <person name="Miranda-Saavedra D."/>
            <person name="O'Leary S."/>
            <person name="Ortiz-Castellanos L."/>
            <person name="Poulter R."/>
            <person name="Rodriguez-Romero J."/>
            <person name="Ruiz-Herrera J."/>
            <person name="Shen Y.-Q."/>
            <person name="Zeng Q."/>
            <person name="Galagan J."/>
            <person name="Birren B.W."/>
            <person name="Cuomo C.A."/>
            <person name="Wickes B.L."/>
        </authorList>
    </citation>
    <scope>NUCLEOTIDE SEQUENCE [LARGE SCALE GENOMIC DNA]</scope>
    <source>
        <strain>RA 99-880 / ATCC MYA-4621 / FGSC 9543 / NRRL 43880</strain>
    </source>
</reference>
<reference key="2">
    <citation type="journal article" date="2016" name="Fungal Genet. Biol.">
        <title>Heterologous expression of an active chitin synthase from Rhizopus oryzae.</title>
        <authorList>
            <person name="Salgado-Lugo H."/>
            <person name="Sanchez-Arreguin A."/>
            <person name="Ruiz-Herrera J."/>
        </authorList>
    </citation>
    <scope>FUNCTION</scope>
    <scope>CATALYTIC ACTIVITY</scope>
    <scope>BIOPHYSICOCHEMICAL PROPERTIES</scope>
</reference>